<accession>Q0RDM7</accession>
<evidence type="ECO:0000255" key="1">
    <source>
        <dbReference type="HAMAP-Rule" id="MF_00151"/>
    </source>
</evidence>
<proteinExistence type="inferred from homology"/>
<name>COAD_FRAAA</name>
<gene>
    <name evidence="1" type="primary">coaD</name>
    <name type="ordered locus">FRAAL5808</name>
</gene>
<protein>
    <recommendedName>
        <fullName evidence="1">Phosphopantetheine adenylyltransferase</fullName>
        <ecNumber evidence="1">2.7.7.3</ecNumber>
    </recommendedName>
    <alternativeName>
        <fullName evidence="1">Dephospho-CoA pyrophosphorylase</fullName>
    </alternativeName>
    <alternativeName>
        <fullName evidence="1">Pantetheine-phosphate adenylyltransferase</fullName>
        <shortName evidence="1">PPAT</shortName>
    </alternativeName>
</protein>
<keyword id="KW-0067">ATP-binding</keyword>
<keyword id="KW-0173">Coenzyme A biosynthesis</keyword>
<keyword id="KW-0963">Cytoplasm</keyword>
<keyword id="KW-0460">Magnesium</keyword>
<keyword id="KW-0547">Nucleotide-binding</keyword>
<keyword id="KW-0548">Nucleotidyltransferase</keyword>
<keyword id="KW-1185">Reference proteome</keyword>
<keyword id="KW-0808">Transferase</keyword>
<reference key="1">
    <citation type="journal article" date="2007" name="Genome Res.">
        <title>Genome characteristics of facultatively symbiotic Frankia sp. strains reflect host range and host plant biogeography.</title>
        <authorList>
            <person name="Normand P."/>
            <person name="Lapierre P."/>
            <person name="Tisa L.S."/>
            <person name="Gogarten J.P."/>
            <person name="Alloisio N."/>
            <person name="Bagnarol E."/>
            <person name="Bassi C.A."/>
            <person name="Berry A.M."/>
            <person name="Bickhart D.M."/>
            <person name="Choisne N."/>
            <person name="Couloux A."/>
            <person name="Cournoyer B."/>
            <person name="Cruveiller S."/>
            <person name="Daubin V."/>
            <person name="Demange N."/>
            <person name="Francino M.P."/>
            <person name="Goltsman E."/>
            <person name="Huang Y."/>
            <person name="Kopp O.R."/>
            <person name="Labarre L."/>
            <person name="Lapidus A."/>
            <person name="Lavire C."/>
            <person name="Marechal J."/>
            <person name="Martinez M."/>
            <person name="Mastronunzio J.E."/>
            <person name="Mullin B.C."/>
            <person name="Niemann J."/>
            <person name="Pujic P."/>
            <person name="Rawnsley T."/>
            <person name="Rouy Z."/>
            <person name="Schenowitz C."/>
            <person name="Sellstedt A."/>
            <person name="Tavares F."/>
            <person name="Tomkins J.P."/>
            <person name="Vallenet D."/>
            <person name="Valverde C."/>
            <person name="Wall L.G."/>
            <person name="Wang Y."/>
            <person name="Medigue C."/>
            <person name="Benson D.R."/>
        </authorList>
    </citation>
    <scope>NUCLEOTIDE SEQUENCE [LARGE SCALE GENOMIC DNA]</scope>
    <source>
        <strain>DSM 45986 / CECT 9034 / ACN14a</strain>
    </source>
</reference>
<dbReference type="EC" id="2.7.7.3" evidence="1"/>
<dbReference type="EMBL" id="CT573213">
    <property type="protein sequence ID" value="CAJ64440.1"/>
    <property type="molecule type" value="Genomic_DNA"/>
</dbReference>
<dbReference type="RefSeq" id="WP_011606879.1">
    <property type="nucleotide sequence ID" value="NC_008278.1"/>
</dbReference>
<dbReference type="SMR" id="Q0RDM7"/>
<dbReference type="STRING" id="326424.FRAAL5808"/>
<dbReference type="KEGG" id="fal:FRAAL5808"/>
<dbReference type="eggNOG" id="COG0669">
    <property type="taxonomic scope" value="Bacteria"/>
</dbReference>
<dbReference type="HOGENOM" id="CLU_100149_1_0_11"/>
<dbReference type="OrthoDB" id="9806661at2"/>
<dbReference type="UniPathway" id="UPA00241">
    <property type="reaction ID" value="UER00355"/>
</dbReference>
<dbReference type="Proteomes" id="UP000000657">
    <property type="component" value="Chromosome"/>
</dbReference>
<dbReference type="GO" id="GO:0005737">
    <property type="term" value="C:cytoplasm"/>
    <property type="evidence" value="ECO:0007669"/>
    <property type="project" value="UniProtKB-SubCell"/>
</dbReference>
<dbReference type="GO" id="GO:0005524">
    <property type="term" value="F:ATP binding"/>
    <property type="evidence" value="ECO:0007669"/>
    <property type="project" value="UniProtKB-KW"/>
</dbReference>
<dbReference type="GO" id="GO:0004595">
    <property type="term" value="F:pantetheine-phosphate adenylyltransferase activity"/>
    <property type="evidence" value="ECO:0007669"/>
    <property type="project" value="UniProtKB-UniRule"/>
</dbReference>
<dbReference type="GO" id="GO:0015937">
    <property type="term" value="P:coenzyme A biosynthetic process"/>
    <property type="evidence" value="ECO:0007669"/>
    <property type="project" value="UniProtKB-UniRule"/>
</dbReference>
<dbReference type="CDD" id="cd02163">
    <property type="entry name" value="PPAT"/>
    <property type="match status" value="1"/>
</dbReference>
<dbReference type="Gene3D" id="3.40.50.620">
    <property type="entry name" value="HUPs"/>
    <property type="match status" value="1"/>
</dbReference>
<dbReference type="HAMAP" id="MF_00151">
    <property type="entry name" value="PPAT_bact"/>
    <property type="match status" value="1"/>
</dbReference>
<dbReference type="InterPro" id="IPR004821">
    <property type="entry name" value="Cyt_trans-like"/>
</dbReference>
<dbReference type="InterPro" id="IPR001980">
    <property type="entry name" value="PPAT"/>
</dbReference>
<dbReference type="InterPro" id="IPR014729">
    <property type="entry name" value="Rossmann-like_a/b/a_fold"/>
</dbReference>
<dbReference type="NCBIfam" id="TIGR01510">
    <property type="entry name" value="coaD_prev_kdtB"/>
    <property type="match status" value="1"/>
</dbReference>
<dbReference type="NCBIfam" id="TIGR00125">
    <property type="entry name" value="cyt_tran_rel"/>
    <property type="match status" value="1"/>
</dbReference>
<dbReference type="PANTHER" id="PTHR21342">
    <property type="entry name" value="PHOSPHOPANTETHEINE ADENYLYLTRANSFERASE"/>
    <property type="match status" value="1"/>
</dbReference>
<dbReference type="PANTHER" id="PTHR21342:SF1">
    <property type="entry name" value="PHOSPHOPANTETHEINE ADENYLYLTRANSFERASE"/>
    <property type="match status" value="1"/>
</dbReference>
<dbReference type="Pfam" id="PF01467">
    <property type="entry name" value="CTP_transf_like"/>
    <property type="match status" value="1"/>
</dbReference>
<dbReference type="PRINTS" id="PR01020">
    <property type="entry name" value="LPSBIOSNTHSS"/>
</dbReference>
<dbReference type="SUPFAM" id="SSF52374">
    <property type="entry name" value="Nucleotidylyl transferase"/>
    <property type="match status" value="1"/>
</dbReference>
<feature type="chain" id="PRO_1000011142" description="Phosphopantetheine adenylyltransferase">
    <location>
        <begin position="1"/>
        <end position="162"/>
    </location>
</feature>
<feature type="binding site" evidence="1">
    <location>
        <begin position="9"/>
        <end position="10"/>
    </location>
    <ligand>
        <name>ATP</name>
        <dbReference type="ChEBI" id="CHEBI:30616"/>
    </ligand>
</feature>
<feature type="binding site" evidence="1">
    <location>
        <position position="9"/>
    </location>
    <ligand>
        <name>substrate</name>
    </ligand>
</feature>
<feature type="binding site" evidence="1">
    <location>
        <position position="17"/>
    </location>
    <ligand>
        <name>ATP</name>
        <dbReference type="ChEBI" id="CHEBI:30616"/>
    </ligand>
</feature>
<feature type="binding site" evidence="1">
    <location>
        <position position="41"/>
    </location>
    <ligand>
        <name>substrate</name>
    </ligand>
</feature>
<feature type="binding site" evidence="1">
    <location>
        <position position="77"/>
    </location>
    <ligand>
        <name>substrate</name>
    </ligand>
</feature>
<feature type="binding site" evidence="1">
    <location>
        <position position="91"/>
    </location>
    <ligand>
        <name>substrate</name>
    </ligand>
</feature>
<feature type="binding site" evidence="1">
    <location>
        <begin position="92"/>
        <end position="94"/>
    </location>
    <ligand>
        <name>ATP</name>
        <dbReference type="ChEBI" id="CHEBI:30616"/>
    </ligand>
</feature>
<feature type="binding site" evidence="1">
    <location>
        <position position="102"/>
    </location>
    <ligand>
        <name>ATP</name>
        <dbReference type="ChEBI" id="CHEBI:30616"/>
    </ligand>
</feature>
<feature type="binding site" evidence="1">
    <location>
        <begin position="126"/>
        <end position="132"/>
    </location>
    <ligand>
        <name>ATP</name>
        <dbReference type="ChEBI" id="CHEBI:30616"/>
    </ligand>
</feature>
<feature type="site" description="Transition state stabilizer" evidence="1">
    <location>
        <position position="17"/>
    </location>
</feature>
<organism>
    <name type="scientific">Frankia alni (strain DSM 45986 / CECT 9034 / ACN14a)</name>
    <dbReference type="NCBI Taxonomy" id="326424"/>
    <lineage>
        <taxon>Bacteria</taxon>
        <taxon>Bacillati</taxon>
        <taxon>Actinomycetota</taxon>
        <taxon>Actinomycetes</taxon>
        <taxon>Frankiales</taxon>
        <taxon>Frankiaceae</taxon>
        <taxon>Frankia</taxon>
    </lineage>
</organism>
<sequence length="162" mass="17932">MRRAVCPGSFDPITNGHLDIVIRASKLFDEVVVAVSINKNKATLFTIDERMELIREAVRNHPMAPSNVVVDASHGLVVDFCRARGIQSIVKGLRAVSDFDYELQMAQMNNSLAGVETLFMSTNPQYAFLSSSLVKEVARYGGDVSHLVPDVVLKQLRERAVE</sequence>
<comment type="function">
    <text evidence="1">Reversibly transfers an adenylyl group from ATP to 4'-phosphopantetheine, yielding dephospho-CoA (dPCoA) and pyrophosphate.</text>
</comment>
<comment type="catalytic activity">
    <reaction evidence="1">
        <text>(R)-4'-phosphopantetheine + ATP + H(+) = 3'-dephospho-CoA + diphosphate</text>
        <dbReference type="Rhea" id="RHEA:19801"/>
        <dbReference type="ChEBI" id="CHEBI:15378"/>
        <dbReference type="ChEBI" id="CHEBI:30616"/>
        <dbReference type="ChEBI" id="CHEBI:33019"/>
        <dbReference type="ChEBI" id="CHEBI:57328"/>
        <dbReference type="ChEBI" id="CHEBI:61723"/>
        <dbReference type="EC" id="2.7.7.3"/>
    </reaction>
</comment>
<comment type="cofactor">
    <cofactor evidence="1">
        <name>Mg(2+)</name>
        <dbReference type="ChEBI" id="CHEBI:18420"/>
    </cofactor>
</comment>
<comment type="pathway">
    <text evidence="1">Cofactor biosynthesis; coenzyme A biosynthesis; CoA from (R)-pantothenate: step 4/5.</text>
</comment>
<comment type="subunit">
    <text evidence="1">Homohexamer.</text>
</comment>
<comment type="subcellular location">
    <subcellularLocation>
        <location evidence="1">Cytoplasm</location>
    </subcellularLocation>
</comment>
<comment type="similarity">
    <text evidence="1">Belongs to the bacterial CoaD family.</text>
</comment>